<dbReference type="EC" id="6.3.2.-" evidence="5"/>
<dbReference type="EMBL" id="MT800759">
    <property type="protein sequence ID" value="QOW41314.1"/>
    <property type="molecule type" value="Genomic_DNA"/>
</dbReference>
<dbReference type="SMR" id="P0DUV4"/>
<dbReference type="ESTHER" id="morap-mpba">
    <property type="family name" value="Thioesterase"/>
</dbReference>
<dbReference type="GO" id="GO:0005737">
    <property type="term" value="C:cytoplasm"/>
    <property type="evidence" value="ECO:0007669"/>
    <property type="project" value="TreeGrafter"/>
</dbReference>
<dbReference type="GO" id="GO:0016853">
    <property type="term" value="F:isomerase activity"/>
    <property type="evidence" value="ECO:0007669"/>
    <property type="project" value="UniProtKB-KW"/>
</dbReference>
<dbReference type="GO" id="GO:0016874">
    <property type="term" value="F:ligase activity"/>
    <property type="evidence" value="ECO:0007669"/>
    <property type="project" value="UniProtKB-KW"/>
</dbReference>
<dbReference type="GO" id="GO:0031177">
    <property type="term" value="F:phosphopantetheine binding"/>
    <property type="evidence" value="ECO:0007669"/>
    <property type="project" value="InterPro"/>
</dbReference>
<dbReference type="GO" id="GO:0043041">
    <property type="term" value="P:amino acid activation for nonribosomal peptide biosynthetic process"/>
    <property type="evidence" value="ECO:0007669"/>
    <property type="project" value="TreeGrafter"/>
</dbReference>
<dbReference type="GO" id="GO:0044550">
    <property type="term" value="P:secondary metabolite biosynthetic process"/>
    <property type="evidence" value="ECO:0007669"/>
    <property type="project" value="TreeGrafter"/>
</dbReference>
<dbReference type="CDD" id="cd12117">
    <property type="entry name" value="A_NRPS_Srf_like"/>
    <property type="match status" value="5"/>
</dbReference>
<dbReference type="CDD" id="cd19544">
    <property type="entry name" value="E-C_NRPS"/>
    <property type="match status" value="3"/>
</dbReference>
<dbReference type="CDD" id="cd19531">
    <property type="entry name" value="LCL_NRPS-like"/>
    <property type="match status" value="1"/>
</dbReference>
<dbReference type="FunFam" id="3.30.300.30:FF:000010">
    <property type="entry name" value="Enterobactin synthetase component F"/>
    <property type="match status" value="5"/>
</dbReference>
<dbReference type="FunFam" id="3.30.559.10:FF:000012">
    <property type="entry name" value="Non-ribosomal peptide synthetase"/>
    <property type="match status" value="1"/>
</dbReference>
<dbReference type="FunFam" id="3.30.559.30:FF:000001">
    <property type="entry name" value="Non-ribosomal peptide synthetase"/>
    <property type="match status" value="1"/>
</dbReference>
<dbReference type="FunFam" id="3.40.50.12780:FF:000012">
    <property type="entry name" value="Non-ribosomal peptide synthetase"/>
    <property type="match status" value="4"/>
</dbReference>
<dbReference type="FunFam" id="3.40.50.980:FF:000001">
    <property type="entry name" value="Non-ribosomal peptide synthetase"/>
    <property type="match status" value="4"/>
</dbReference>
<dbReference type="FunFam" id="2.30.38.10:FF:000001">
    <property type="entry name" value="Non-ribosomal peptide synthetase PvdI"/>
    <property type="match status" value="4"/>
</dbReference>
<dbReference type="FunFam" id="1.10.1200.10:FF:000005">
    <property type="entry name" value="Nonribosomal peptide synthetase 1"/>
    <property type="match status" value="5"/>
</dbReference>
<dbReference type="Gene3D" id="3.30.300.30">
    <property type="match status" value="5"/>
</dbReference>
<dbReference type="Gene3D" id="3.40.50.980">
    <property type="match status" value="10"/>
</dbReference>
<dbReference type="Gene3D" id="1.10.1200.10">
    <property type="entry name" value="ACP-like"/>
    <property type="match status" value="4"/>
</dbReference>
<dbReference type="Gene3D" id="3.40.50.1820">
    <property type="entry name" value="alpha/beta hydrolase"/>
    <property type="match status" value="1"/>
</dbReference>
<dbReference type="Gene3D" id="3.30.559.10">
    <property type="entry name" value="Chloramphenicol acetyltransferase-like domain"/>
    <property type="match status" value="4"/>
</dbReference>
<dbReference type="Gene3D" id="2.30.38.10">
    <property type="entry name" value="Luciferase, Domain 3"/>
    <property type="match status" value="5"/>
</dbReference>
<dbReference type="Gene3D" id="3.30.559.30">
    <property type="entry name" value="Nonribosomal peptide synthetase, condensation domain"/>
    <property type="match status" value="5"/>
</dbReference>
<dbReference type="InterPro" id="IPR010071">
    <property type="entry name" value="AA_adenyl_dom"/>
</dbReference>
<dbReference type="InterPro" id="IPR029058">
    <property type="entry name" value="AB_hydrolase_fold"/>
</dbReference>
<dbReference type="InterPro" id="IPR036736">
    <property type="entry name" value="ACP-like_sf"/>
</dbReference>
<dbReference type="InterPro" id="IPR025110">
    <property type="entry name" value="AMP-bd_C"/>
</dbReference>
<dbReference type="InterPro" id="IPR045851">
    <property type="entry name" value="AMP-bd_C_sf"/>
</dbReference>
<dbReference type="InterPro" id="IPR020845">
    <property type="entry name" value="AMP-binding_CS"/>
</dbReference>
<dbReference type="InterPro" id="IPR000873">
    <property type="entry name" value="AMP-dep_synth/lig_dom"/>
</dbReference>
<dbReference type="InterPro" id="IPR023213">
    <property type="entry name" value="CAT-like_dom_sf"/>
</dbReference>
<dbReference type="InterPro" id="IPR001242">
    <property type="entry name" value="Condensatn"/>
</dbReference>
<dbReference type="InterPro" id="IPR020806">
    <property type="entry name" value="PKS_PP-bd"/>
</dbReference>
<dbReference type="InterPro" id="IPR009081">
    <property type="entry name" value="PP-bd_ACP"/>
</dbReference>
<dbReference type="InterPro" id="IPR006162">
    <property type="entry name" value="Ppantetheine_attach_site"/>
</dbReference>
<dbReference type="InterPro" id="IPR001031">
    <property type="entry name" value="Thioesterase"/>
</dbReference>
<dbReference type="NCBIfam" id="TIGR01733">
    <property type="entry name" value="AA-adenyl-dom"/>
    <property type="match status" value="5"/>
</dbReference>
<dbReference type="NCBIfam" id="NF003417">
    <property type="entry name" value="PRK04813.1"/>
    <property type="match status" value="5"/>
</dbReference>
<dbReference type="PANTHER" id="PTHR45527:SF1">
    <property type="entry name" value="FATTY ACID SYNTHASE"/>
    <property type="match status" value="1"/>
</dbReference>
<dbReference type="PANTHER" id="PTHR45527">
    <property type="entry name" value="NONRIBOSOMAL PEPTIDE SYNTHETASE"/>
    <property type="match status" value="1"/>
</dbReference>
<dbReference type="Pfam" id="PF00501">
    <property type="entry name" value="AMP-binding"/>
    <property type="match status" value="5"/>
</dbReference>
<dbReference type="Pfam" id="PF13193">
    <property type="entry name" value="AMP-binding_C"/>
    <property type="match status" value="5"/>
</dbReference>
<dbReference type="Pfam" id="PF00668">
    <property type="entry name" value="Condensation"/>
    <property type="match status" value="5"/>
</dbReference>
<dbReference type="Pfam" id="PF00550">
    <property type="entry name" value="PP-binding"/>
    <property type="match status" value="5"/>
</dbReference>
<dbReference type="Pfam" id="PF00975">
    <property type="entry name" value="Thioesterase"/>
    <property type="match status" value="1"/>
</dbReference>
<dbReference type="SMART" id="SM00823">
    <property type="entry name" value="PKS_PP"/>
    <property type="match status" value="5"/>
</dbReference>
<dbReference type="SUPFAM" id="SSF56801">
    <property type="entry name" value="Acetyl-CoA synthetase-like"/>
    <property type="match status" value="5"/>
</dbReference>
<dbReference type="SUPFAM" id="SSF47336">
    <property type="entry name" value="ACP-like"/>
    <property type="match status" value="5"/>
</dbReference>
<dbReference type="SUPFAM" id="SSF53474">
    <property type="entry name" value="alpha/beta-Hydrolases"/>
    <property type="match status" value="1"/>
</dbReference>
<dbReference type="SUPFAM" id="SSF52777">
    <property type="entry name" value="CoA-dependent acyltransferases"/>
    <property type="match status" value="9"/>
</dbReference>
<dbReference type="PROSITE" id="PS00455">
    <property type="entry name" value="AMP_BINDING"/>
    <property type="match status" value="5"/>
</dbReference>
<dbReference type="PROSITE" id="PS50075">
    <property type="entry name" value="CARRIER"/>
    <property type="match status" value="5"/>
</dbReference>
<dbReference type="PROSITE" id="PS00012">
    <property type="entry name" value="PHOSPHOPANTETHEINE"/>
    <property type="match status" value="4"/>
</dbReference>
<gene>
    <name evidence="6" type="primary">mpbA</name>
</gene>
<evidence type="ECO:0000255" key="1"/>
<evidence type="ECO:0000255" key="2">
    <source>
        <dbReference type="PROSITE-ProRule" id="PRU00258"/>
    </source>
</evidence>
<evidence type="ECO:0000256" key="3">
    <source>
        <dbReference type="SAM" id="MobiDB-lite"/>
    </source>
</evidence>
<evidence type="ECO:0000269" key="4">
    <source>
    </source>
</evidence>
<evidence type="ECO:0000269" key="5">
    <source>
    </source>
</evidence>
<evidence type="ECO:0000303" key="6">
    <source>
    </source>
</evidence>
<evidence type="ECO:0000305" key="7"/>
<evidence type="ECO:0000305" key="8">
    <source>
    </source>
</evidence>
<evidence type="ECO:0000305" key="9">
    <source>
    </source>
</evidence>
<name>MPBA_MORAP</name>
<sequence>MGDKRPDGIKSAESHGQPSAPFGAENSEVVQRTLEAVIAQATDVIDTASISLRVVQVENTGEVNSTILKVTRNKAAECIPSPARSSSPDQEGDCSSIVTVQRSHECKSFCATPLTRTASTASVASSLSTLRPGSSEKEDDIARDESAKVHADPWHVALAEAHAPLELFTDRPRHSGLSLARAQHTFRIDTPLKQLLASLSVEHKLSFSTTILVGWSIVLSRLTGQEDILVGLGNVDTPIMPVRIDLAGDPNTPQLLARVRDTLLVAGASPDLKDKCNTRLLPLFPGETFPSVQAEFYAHGDQASDKIQNSAPASVDIELHLHDAAQDAFACIRYPTALFNADTIERHAGYLVAVLMNMVINGSQSVATIDIISPAEKTLVLKTWNESSSEYPADRCVQRLFEEQVDKSPDAVAIVHENQSFTYLELDALADRIAHKLVHAGIKQGDFVTTLLPRSVELVAAQLAVLKVGAAYVPIDPKAPLDRQVFIVNDSASRLLITDIHVETATALDLPLLRIDIAELQSKEEYSGVITLTRSSQDAAYVMYTSGSTGRPKGVMVLHQGIVRLVMNNGFAPIGPGDRVAFAANPAFDASTFEVWAPLLNGGCLVVIDSDTSAHPKRLEDALKRYHINTLWLTMTLFNQYVCSIGPALAKLKYLLCGGEQGNQETFAALLKHGGPQNLINGYGPTEATTFATTYNASRMRNKPDRLPIGRPIGSTYVYVLDKHGNLAPLGAVGELHIAGAGVAAGYLNRPDLTAEKFLPNPFSKTQGAYMYKSGDLVRYLPDGNLVFVGRNDDQVKIRGFRIELGEIEARLVEHDLVRESVVLALGEGSEKRLVAYVVAEPTEGLAHTLRSHIEERLPVYMIPAAFVRLGAIPVTANGKIDRRALPEPQEDAFARQAYEVPCGETEDAIAAIWSELLGVNQISRHDSFFALGGHSLLVVKMLDRLHRLGLTVSVRVLFESPTLSVLAQDLSKHQAMIIPPNLITLETSKLTPEMLPLIDLKQDDIDRIISQVPGGIHNIQDVYSLAPLQDGILFHHLLAAEGDPYLLISHLAFRDRVLVDRYLDAFQKVVDRHDILRTAVFWDALSTPAQVVLRSAPLSVTEHVLDPAAGPVADKLSQRYNHSKYRMDLTQAPLLRFALAEDIDGRWIMAQMMHHLIIDHAAIEVMNAEVEAVLEGREDTLSTPPQFRDLVAQVRAGPTQEEHEHFFAEMLGDIEEPTFPFGLTEVHSNGDEVKEAHMTVPQDLNDRLRAQAKRLGVTLAALCHTAWAQVLARTSGQDHVVFGTVLVGGLQGEQSDQSGMGISINTLPFRCDMDDRSVQECVSQIHSRLAALVEHENASLALAQRCSGVPAGSPLFSALMNYRHTLMPTSGCDPSDIEFTAKEERVNYGGIDFLGGQERTNYPFTLSVEDFGQALGLTAQVLQPVDPADVCRYVQQALSSLVLALENAPDMAVSDLDVLPLDERTKLLQLWNATNSPYPDHLCVHALFEQQVKQSPITIAVEHGDQSITYAQLNITASHLAYQLSAQGIGHGDRVATYLPRSFELITAQLAILKIGANYVPIDPKAPLDRQAYIVSDSGSRLVITDEDTDVPVAIGAPLLRLTSFRKLQLSTAMDAGWRAYSGLDSPKTTIERSSLETAYIMYTSGSTGLPKGVMVPHRGIARLVFNNSFTSISSSDRIVFGANPAFDASTFEVWAPLLNGGRVVIIDAEVLTDSRLLAETIETRQVTVLFLTPALFNQYAESIGQSLARLRYIISGGEQGNLEAYSALLRHKGPVQIINAYGPTEATMVATTFTASFDVSGLDVLPIGRPIGNTQVYVLDQHRHPVPMGVVGELYISGPGVANGYLNRLDLTEDRFFPDPFTEIHGSRMYKSGDMVRYLPDGNLVYMGRNDDQIKIRGFRVELGEIEARLVQHSQVRNAVVVPCGEVDDKRLVAYIAADPSEHWARTLHNHLASTLPEYMIPSAFVQLDALPMNNNGKIDRRALPTPDASAFATENYVSPQGRIECALAEIWAEVLKVPRVGRHDNFFLLGGHSLLAVRLMNRISTLGAQLPLSALFASPTLSSFAQAFKGQLSQDDQSHNVIPRVSRSEPLELSFSQQRLWFLAQMEGVSEIYHIPSVLRLRGTLNLEAWQRTLDTLFARHESLRTVFSTVQSQPQIKILPADLGLPLVHHDLRGEQDKHASLKLLSAAEAIMPFDLERGPLIRAQLIQLTDDEHIFLLTQHHIVSDGWSFGILIRELRELYIAYRNGLPNPLRPLAIQYPDYAAWQRCWLNEGRLEAQSAYWKKTLAEAPVSIELPTDRPRPPQQSFTGASVPVRVDAHVTQALKALSQKHGATMFMVVLSAWSAVLSRLSGQDDIVIGSPSANRGHEQVEQLIGFFVNTLALRVDLSGQPNMEQLLKRVRETTVSAQAHQDLPFEQVVEIAQPPRRMDQTPLFQVLFAWQNNDIEMLRLPDLDVTVEELSYDIVKFDLELELYEDKDEICGCLHYSTALFDASTVARHVGYLEAMLRAMATNISQPIETVELLGSTEEELLLQTWNQTEKPFPDDRCIHGLFEDQVERSPDAIAVVHDDRILTYRELNVRADIVAFQLARAGVRPGDSVLTLLSRSINSVVSQIAILKAGAVYVPMDPKAPADRLAYMAADSCARLLVTDECLIVPISIQVPILRLENQPSKNPERHDIVVISRETTANDTAYVMYTSGSTGLPKGVMVSHRAITRLVVNNRLAHITSDDRMALSINPTFDPSTFEVWAPLLHGAQLVILDHDIITDAQCLAEALDHNDITFLVLPMALFHQFAFVIAPALSRLRYIMCGGEQGSIEAFSSILQQGGRVRLINGYGPTEVTTVTTAYVATGSLVSLDRLPIGRPISNTRVYVLDKLRRPVPLGAVGELYIGGPGVATGYLNRPELTAERFLTDPFSKIEGARMYKSGDLVRYLSDGNLIFMGRNDDQVKIRGFRVELGEIEERLLEHALVRETVVVVTGEGNGKRLVAYIVSEPTVQLPVLMREHLGASLPEYMIPTAFVRLETMPLTNNGKVDRRALPEPDSDSFVNKDYEEPQGEVEMKLAAIWSELLKVDKIGRQDNFFMLGGHSLLAVQMIGQLRRIGFVMSVRALFETPVLSVLAASITRGCEVPETPATPVNLITATTAKITPDLLPLIDLSQDDIDRITDQIPGGVANIQDIYSLSPLQDGILFHHMMATEDDPYLLTICTAFRDRDLLERYLDAIQQIVDRHDILRTAIVWRNMTTPAQVVLRKAAISVTELTLDPANSPIIEQLRKLYDARKHRIELDVAPLNRYAVAQDTDGRWIMIQMLHHIVGDHSTLELMDEEIQKIFSGRGETLAAPQPFRNLIAQVRSGLTFQEHEEFFSKMLSDIDAPALPYGLSDVHREGANVTETQLMLPQKLNDRLRSQARRLGVSLASLCHLAWAQVIAATSGQYHVVFGTVLFGRMQGGSGADRAMGLFINTLPLRVDVEKGSILESVHKVQTDLATLLEHEHASLALAQRCSSIPSGSPLFSALLNYRHNDDTFTQSELDSGIEIIDGHERTNYPFVLSVEDCGTSFGVTVQVVEPYASASVCGYMQQVLQSLADALEHTPDAPIQGLKVIPAEEHDLLIHSWNRTDSPFPAHECVHHVFENQVRERPEAIALVHGDQTLTYCELNTRANNLARQLLDAGVKPGDLVPTLLSRSIDLVTAQLAIVKAGAAYVPIDVKAPADRQAYIVSDSGARLLVTGEHTVVHDSIQAQLFRLGAIDAKNLHQQDASVSIGAIGTSCDTAYVMYTSGSTGMPKGVMIPHRGITRLVINNGHANYGPDDCVVFGANPAFDASTIEVWAPLLNGGRLVIVDADVYTDAQRLAGLLERYAVTVLFLTPVLLNHYVPIIGQSLSKLRYLLSGGEQGSLHAYSTLLHLGGRVRLINAYGPTESTTIATTYEATISNIDALECLPIGRPMANTQVYVLDKHFQPVPTGAVGELYIGGAGLANGYLNRPDLTAELFLPNVFSKDGGARMYRTGDLVKYLPDGNLVFMGRNDEQVKIRGFRIELGEIETRLVEHELVTEAVVVALGNEGDKRLVAYVVAESAKQLASTLREHISTSLPEYMVPAAFVRLDALPFTANGKLDRRHLPAPDASAFVAQDYEAPRGDIEISLAEMWTDLLKIDQVGRHDNFFTLGGHSLLAVQMIEQLRRIGLSLSVRALFDTPVLSVLAASLNTHQAAPETPANLITAATTVITPDLLPLIDLTQGDIDCIVDQVPGGVANVQDVYSLSPLQDGILFHHMMATEGDPYLLIAGYSFRDRELLDRYLDAVQQIVDRHDILRTAIVSENLTVPAQVVLRKAPLSITELKLDPSDGAITSQLMQLYDARKYRIELRSAPLTRFIIAQDADGRWIMVQLLHHIIGDHSTLEIMDEEIKTILGGKANTLPAPQPFRNLVAQVRLGLTVQEHEEFFSKMLSDIDTPALPYGLSDVHREGAGVTETHLMLPPNLNDRLRRHAKRLGVSPASLCHLAWAQVIAATSGQRHVVFGTVLFGRMQGGSGADRTMGLFINTLPLRVDIENNTVLESVRKVQTDLATLLEHEHASLALAQRCSSIPSGSPLFSALLNYRHNATPFTQVETYDGVEAIEGHERTNYPFVLSVEDFGTSFGVTVQVVEPYASASVCGYMQQVLQSLADALEHTPDAPIQGLKVIPAEEHDLLIHSWNQTESSFPAHQCVHHVFENQVRERPEAIALVHGDQTLTYRELNARVNNLARQLMDAGVKPGDLVPTLLSRSIDLVIVQLAIVKAGAAYVPIDVKAPADRQAYIVSDSGARLLVTGEHTVVHNSIQVQLFRLRAIDAKNLHQQDVSVSIGAIGSSCDTAYVMYTSGSTGMPKGVMIPHRGITRLVINNGHANYGSDDCVVFGANPAFDASTIEVWAPLLNGGRLVIVDADVYTDAQRLAGVLERYAVTVLFLTPVLLNHYVPIIGQSLSKLRYLLSGGEQGSLHAYSTLLHLGGRVRLINAYGPTESTTIATTYEATISNIDALECLPIGRPMANTQVYVLDKHFQPVPTGAVGELYIGGAGLANGYLNRPDLTAELFLPNVFSKDGGARMYRTGDLVKYLPDGNLVFMGRNDEQVKIRGFRIELGEIEARLVEHELVTEAVVLALGSGSEKRLVAYVVAEHNEELLHILREHLAASVPEYMIPAAFVRLDQLPVTNNGKVDRRALPDPEATAFASTSYELPSGDVEIGLAEIWAELLSLDRVGRHDNFFMLGGHSLLAVRMAGSVRSRLGLDLKLHSLFAAPTVAELAQKLVQGGANEDDEYSVIFPLKTSGNRPPLFCIHSGLGLSWPYIGLVKHLHPEQPVYGVQARGLDGRTKLATSVEEMTLDYMEQIRRIQPHGPYHLLGWSFGGTVAHSMATELEKRGEQVPLLAIMDSTADYSIVAHLKVDEIDGGANFEHLVRFGGDVSGEDGWALWERTKPINDNSFVLAMQFKPSVYNGNILFFRATQKENDLTPMVNPFSWRPYTNGAIEVHNVECTHIEMDKPESMAIIGRTVTSKLQRS</sequence>
<protein>
    <recommendedName>
        <fullName evidence="6">Malpibaldin synthetase</fullName>
        <ecNumber evidence="5">6.3.2.-</ecNumber>
    </recommendedName>
    <alternativeName>
        <fullName evidence="6">Nonribosomal peptide synthetase mpbA</fullName>
        <shortName evidence="6">NRPS mpbA</shortName>
    </alternativeName>
</protein>
<keyword id="KW-0413">Isomerase</keyword>
<keyword id="KW-0436">Ligase</keyword>
<keyword id="KW-0511">Multifunctional enzyme</keyword>
<keyword id="KW-0596">Phosphopantetheine</keyword>
<keyword id="KW-0597">Phosphoprotein</keyword>
<keyword id="KW-0677">Repeat</keyword>
<organism>
    <name type="scientific">Mortierella alpina</name>
    <name type="common">Oleaginous fungus</name>
    <name type="synonym">Mortierella renispora</name>
    <dbReference type="NCBI Taxonomy" id="64518"/>
    <lineage>
        <taxon>Eukaryota</taxon>
        <taxon>Fungi</taxon>
        <taxon>Fungi incertae sedis</taxon>
        <taxon>Mucoromycota</taxon>
        <taxon>Mortierellomycotina</taxon>
        <taxon>Mortierellomycetes</taxon>
        <taxon>Mortierellales</taxon>
        <taxon>Mortierellaceae</taxon>
        <taxon>Mortierella</taxon>
    </lineage>
</organism>
<proteinExistence type="evidence at protein level"/>
<feature type="chain" id="PRO_0000453667" description="Malpibaldin synthetase">
    <location>
        <begin position="1"/>
        <end position="5541"/>
    </location>
</feature>
<feature type="domain" description="Carrier 1" evidence="2">
    <location>
        <begin position="901"/>
        <end position="975"/>
    </location>
</feature>
<feature type="domain" description="Carrier 2" evidence="2">
    <location>
        <begin position="2001"/>
        <end position="2075"/>
    </location>
</feature>
<feature type="domain" description="Carrier 3" evidence="2">
    <location>
        <begin position="3058"/>
        <end position="3132"/>
    </location>
</feature>
<feature type="domain" description="Carrier 4" evidence="2">
    <location>
        <begin position="4140"/>
        <end position="4214"/>
    </location>
</feature>
<feature type="domain" description="Carrier 5" evidence="2">
    <location>
        <begin position="5219"/>
        <end position="5294"/>
    </location>
</feature>
<feature type="region of interest" description="Disordered" evidence="3">
    <location>
        <begin position="1"/>
        <end position="26"/>
    </location>
</feature>
<feature type="region of interest" description="Condensation 1" evidence="1 8">
    <location>
        <begin position="137"/>
        <end position="378"/>
    </location>
</feature>
<feature type="region of interest" description="Adenylation 1" evidence="1 8">
    <location>
        <begin position="401"/>
        <end position="799"/>
    </location>
</feature>
<feature type="region of interest" description="Dual epimerase/condensation (E/C) domain 1" evidence="1 8">
    <location>
        <begin position="1021"/>
        <end position="1469"/>
    </location>
</feature>
<feature type="region of interest" description="Adenylation 2" evidence="1 8">
    <location>
        <begin position="1489"/>
        <end position="1899"/>
    </location>
</feature>
<feature type="region of interest" description="Condensation 2" evidence="1 8">
    <location>
        <begin position="2095"/>
        <end position="2537"/>
    </location>
</feature>
<feature type="region of interest" description="Adenylation 3" evidence="1 8">
    <location>
        <begin position="2557"/>
        <end position="2956"/>
    </location>
</feature>
<feature type="region of interest" description="Dual epimerase/condensation (E/C) domain 2" evidence="1 8">
    <location>
        <begin position="3182"/>
        <end position="3616"/>
    </location>
</feature>
<feature type="region of interest" description="Adenylation 4" evidence="1 8">
    <location>
        <begin position="3637"/>
        <end position="4038"/>
    </location>
</feature>
<feature type="region of interest" description="Dual epimerase/condensation (E/C) domain 3" evidence="1 8">
    <location>
        <begin position="4260"/>
        <end position="4695"/>
    </location>
</feature>
<feature type="region of interest" description="Adenylation 5" evidence="1 8">
    <location>
        <begin position="4716"/>
        <end position="5117"/>
    </location>
</feature>
<feature type="region of interest" description="Thioesterase (TE) domain" evidence="1 8">
    <location>
        <begin position="5315"/>
        <end position="5523"/>
    </location>
</feature>
<feature type="compositionally biased region" description="Basic and acidic residues" evidence="3">
    <location>
        <begin position="1"/>
        <end position="13"/>
    </location>
</feature>
<feature type="modified residue" description="O-(pantetheine 4'-phosphoryl)serine" evidence="2">
    <location>
        <position position="936"/>
    </location>
</feature>
<feature type="modified residue" description="O-(pantetheine 4'-phosphoryl)serine" evidence="2">
    <location>
        <position position="2036"/>
    </location>
</feature>
<feature type="modified residue" description="O-(pantetheine 4'-phosphoryl)serine" evidence="2">
    <location>
        <position position="3093"/>
    </location>
</feature>
<feature type="modified residue" description="O-(pantetheine 4'-phosphoryl)serine" evidence="2">
    <location>
        <position position="4175"/>
    </location>
</feature>
<feature type="modified residue" description="O-(pantetheine 4'-phosphoryl)serine" evidence="2">
    <location>
        <position position="5254"/>
    </location>
</feature>
<accession>P0DUV4</accession>
<accession>A0A7S7ADA4</accession>
<reference key="1">
    <citation type="journal article" date="2021" name="Appl. Environ. Microbiol.">
        <title>Bacterial-like nonribosomal peptide synthetases produce cyclopeptides in the zygomycetous fungus Mortierella alpina.</title>
        <authorList>
            <person name="Wurlitzer J.M."/>
            <person name="Stanisic A."/>
            <person name="Wasmuth I."/>
            <person name="Jungmann S."/>
            <person name="Fischer D."/>
            <person name="Kries H."/>
            <person name="Gressler M."/>
        </authorList>
    </citation>
    <scope>NUCLEOTIDE SEQUENCE [GENOMIC DNA]</scope>
    <scope>FUNCTION</scope>
    <scope>DOMAIN</scope>
    <scope>CATALYTIC ACTIVITY</scope>
    <scope>INDUCTION</scope>
</reference>
<reference key="2">
    <citation type="journal article" date="2019" name="Org. Lett.">
        <title>Fungal Biosurfactants from Mortierella alpina.</title>
        <authorList>
            <person name="Baldeweg F."/>
            <person name="Warncke P."/>
            <person name="Fischer D."/>
            <person name="Gressler M."/>
        </authorList>
    </citation>
    <scope>BIOTECHNOLOGY</scope>
</reference>
<reference key="3">
    <citation type="journal article" date="2021" name="J. Fungi">
        <title>Terpenoid biosynthesis dominates among secondary metabolite clusters in mucoromycotina genomes.</title>
        <authorList>
            <person name="Koczyk G."/>
            <person name="Pawlowska J."/>
            <person name="Muszewska A."/>
        </authorList>
    </citation>
    <scope>FUNCTION</scope>
</reference>
<comment type="function">
    <text evidence="5 9">Nonribosomal peptide synthetase that catalyzes the biosynthesis of the hydrophobic cyclopentapeptides malpibaldins, natural products that show biosurfactant activities (Probable) (PubMed:33158886). Module 3 shows promiscuous adenylation (accepting either Trp, Phe or Tyr) leading to the parallel production of multiple products from one NRPS assembly line, including malpibaldin A corresponding to cyclo(-L-Leu-D-Leu-D-Phe-L-Leu-D-Val-), malpibaldin B corresponding to cyclo(-L-Leu-D-Leu-D-Tyr-L-Leu-D-Val-) and malpibaldin C corresponding to cyclo(-Leu-Leu-Trp-Leu-Val-) (PubMed:33158886).</text>
</comment>
<comment type="induction">
    <text evidence="5">Expression is induced in the presence of fructose.</text>
</comment>
<comment type="domain">
    <text evidence="8">NRP synthetases are composed of discrete domains (adenylation (A), thiolation (T) or peptidyl carrier protein (PCP) and condensation (C) domains) which when grouped together are referred to as a single module. Each module is responsible for the recognition (via the A domain) and incorporation of a single amino acid into the growing peptide product. Thus, an NRP synthetase is generally composed of one or more modules and can terminate in a thioesterase domain (TE) that releases the newly synthesized peptide from the enzyme. Contains bacterial-like dual epimerase/condensation domains allowing the racemization of enzyme-tethered L-amino acids and the subsequent incorporation of D-amino acids into the metabolites. MpbA has the following architecture: C-A-T-E/C-A-T-C-A-T-E/C-A-T-E/C-A-T-TE.</text>
</comment>
<comment type="biotechnology">
    <text evidence="4">Mortierella alpina biosurfactants may have an enormous potential for various applications in pharmacy, health care, food, cosmetics, or textiles since they offer a highly biocompatible and biodegradable alternative for synthetic surfactants in formulations.</text>
</comment>
<comment type="miscellaneous">
    <text evidence="5">The surprising structural and mechanistic similarity to bacterial nonribosomal peptide synthetases (NRPSs) points to an endobacterial origin of the Mortierella mpcA and mpbA genes that differ from their asco- and basidiomycete counterparts and may have evolved independently.</text>
</comment>
<comment type="similarity">
    <text evidence="7">Belongs to the NRP synthetase family.</text>
</comment>